<gene>
    <name evidence="1" type="primary">glmU</name>
    <name type="ordered locus">SEN3676</name>
</gene>
<reference key="1">
    <citation type="journal article" date="2008" name="Genome Res.">
        <title>Comparative genome analysis of Salmonella enteritidis PT4 and Salmonella gallinarum 287/91 provides insights into evolutionary and host adaptation pathways.</title>
        <authorList>
            <person name="Thomson N.R."/>
            <person name="Clayton D.J."/>
            <person name="Windhorst D."/>
            <person name="Vernikos G."/>
            <person name="Davidson S."/>
            <person name="Churcher C."/>
            <person name="Quail M.A."/>
            <person name="Stevens M."/>
            <person name="Jones M.A."/>
            <person name="Watson M."/>
            <person name="Barron A."/>
            <person name="Layton A."/>
            <person name="Pickard D."/>
            <person name="Kingsley R.A."/>
            <person name="Bignell A."/>
            <person name="Clark L."/>
            <person name="Harris B."/>
            <person name="Ormond D."/>
            <person name="Abdellah Z."/>
            <person name="Brooks K."/>
            <person name="Cherevach I."/>
            <person name="Chillingworth T."/>
            <person name="Woodward J."/>
            <person name="Norberczak H."/>
            <person name="Lord A."/>
            <person name="Arrowsmith C."/>
            <person name="Jagels K."/>
            <person name="Moule S."/>
            <person name="Mungall K."/>
            <person name="Saunders M."/>
            <person name="Whitehead S."/>
            <person name="Chabalgoity J.A."/>
            <person name="Maskell D."/>
            <person name="Humphreys T."/>
            <person name="Roberts M."/>
            <person name="Barrow P.A."/>
            <person name="Dougan G."/>
            <person name="Parkhill J."/>
        </authorList>
    </citation>
    <scope>NUCLEOTIDE SEQUENCE [LARGE SCALE GENOMIC DNA]</scope>
    <source>
        <strain>P125109</strain>
    </source>
</reference>
<accession>B5QUS1</accession>
<organism>
    <name type="scientific">Salmonella enteritidis PT4 (strain P125109)</name>
    <dbReference type="NCBI Taxonomy" id="550537"/>
    <lineage>
        <taxon>Bacteria</taxon>
        <taxon>Pseudomonadati</taxon>
        <taxon>Pseudomonadota</taxon>
        <taxon>Gammaproteobacteria</taxon>
        <taxon>Enterobacterales</taxon>
        <taxon>Enterobacteriaceae</taxon>
        <taxon>Salmonella</taxon>
    </lineage>
</organism>
<keyword id="KW-0012">Acyltransferase</keyword>
<keyword id="KW-0133">Cell shape</keyword>
<keyword id="KW-0961">Cell wall biogenesis/degradation</keyword>
<keyword id="KW-0963">Cytoplasm</keyword>
<keyword id="KW-0460">Magnesium</keyword>
<keyword id="KW-0479">Metal-binding</keyword>
<keyword id="KW-0511">Multifunctional enzyme</keyword>
<keyword id="KW-0548">Nucleotidyltransferase</keyword>
<keyword id="KW-0573">Peptidoglycan synthesis</keyword>
<keyword id="KW-0677">Repeat</keyword>
<keyword id="KW-0808">Transferase</keyword>
<name>GLMU_SALEP</name>
<sequence>MLNSAMSVVILAAGKGTRMYSDIPKVLHTLAGKPMVQHVIDAATKLGAAQVHLVYGHGGELLKQTLKDDKLNWVLQAEQLGTGHAMQQAAPFFSDDEDILMLYGDVPLISVETLQRLRDAKPQGGIGLLTVKLDDPSGYGRITRENGKVTGIVEHKDATDEQRQIQEINTGILIANGADLKRWLSKLTNNNAQGEYYITDIIALAYQEGREIAAVHPARISETDGVNNRLQLSRLERIYQAEQAEKLLLSGVMLRDPARFDLRGTLHCGMDVEIDANVIIEGYVTLGHRVKIGAGCIIKNSVIGDDCEISPYSVVEDAHLEAACTIGPFARLRPGAELLAGAHVGNFVEMKKARLGKGSKAGHLTYLGDAEIGDNVNIGAGTITCNYDGANKFKTVIGDDVFVGSDTQLVAPVTVGKGATIAAGTTVTRNVADNELVLSRVPQVHKQGWQRPVKKK</sequence>
<dbReference type="EC" id="2.7.7.23" evidence="1"/>
<dbReference type="EC" id="2.3.1.157" evidence="1"/>
<dbReference type="EMBL" id="AM933172">
    <property type="protein sequence ID" value="CAR35252.1"/>
    <property type="molecule type" value="Genomic_DNA"/>
</dbReference>
<dbReference type="RefSeq" id="WP_000934851.1">
    <property type="nucleotide sequence ID" value="NC_011294.1"/>
</dbReference>
<dbReference type="SMR" id="B5QUS1"/>
<dbReference type="KEGG" id="set:SEN3676"/>
<dbReference type="HOGENOM" id="CLU_029499_15_2_6"/>
<dbReference type="UniPathway" id="UPA00113">
    <property type="reaction ID" value="UER00532"/>
</dbReference>
<dbReference type="UniPathway" id="UPA00113">
    <property type="reaction ID" value="UER00533"/>
</dbReference>
<dbReference type="UniPathway" id="UPA00973"/>
<dbReference type="Proteomes" id="UP000000613">
    <property type="component" value="Chromosome"/>
</dbReference>
<dbReference type="GO" id="GO:0005737">
    <property type="term" value="C:cytoplasm"/>
    <property type="evidence" value="ECO:0007669"/>
    <property type="project" value="UniProtKB-SubCell"/>
</dbReference>
<dbReference type="GO" id="GO:0016020">
    <property type="term" value="C:membrane"/>
    <property type="evidence" value="ECO:0007669"/>
    <property type="project" value="GOC"/>
</dbReference>
<dbReference type="GO" id="GO:0019134">
    <property type="term" value="F:glucosamine-1-phosphate N-acetyltransferase activity"/>
    <property type="evidence" value="ECO:0007669"/>
    <property type="project" value="UniProtKB-UniRule"/>
</dbReference>
<dbReference type="GO" id="GO:0000287">
    <property type="term" value="F:magnesium ion binding"/>
    <property type="evidence" value="ECO:0007669"/>
    <property type="project" value="UniProtKB-UniRule"/>
</dbReference>
<dbReference type="GO" id="GO:0003977">
    <property type="term" value="F:UDP-N-acetylglucosamine diphosphorylase activity"/>
    <property type="evidence" value="ECO:0007669"/>
    <property type="project" value="UniProtKB-UniRule"/>
</dbReference>
<dbReference type="GO" id="GO:0000902">
    <property type="term" value="P:cell morphogenesis"/>
    <property type="evidence" value="ECO:0007669"/>
    <property type="project" value="UniProtKB-UniRule"/>
</dbReference>
<dbReference type="GO" id="GO:0071555">
    <property type="term" value="P:cell wall organization"/>
    <property type="evidence" value="ECO:0007669"/>
    <property type="project" value="UniProtKB-KW"/>
</dbReference>
<dbReference type="GO" id="GO:0009245">
    <property type="term" value="P:lipid A biosynthetic process"/>
    <property type="evidence" value="ECO:0007669"/>
    <property type="project" value="UniProtKB-UniRule"/>
</dbReference>
<dbReference type="GO" id="GO:0009252">
    <property type="term" value="P:peptidoglycan biosynthetic process"/>
    <property type="evidence" value="ECO:0007669"/>
    <property type="project" value="UniProtKB-UniRule"/>
</dbReference>
<dbReference type="GO" id="GO:0008360">
    <property type="term" value="P:regulation of cell shape"/>
    <property type="evidence" value="ECO:0007669"/>
    <property type="project" value="UniProtKB-KW"/>
</dbReference>
<dbReference type="GO" id="GO:0006048">
    <property type="term" value="P:UDP-N-acetylglucosamine biosynthetic process"/>
    <property type="evidence" value="ECO:0007669"/>
    <property type="project" value="UniProtKB-UniPathway"/>
</dbReference>
<dbReference type="CDD" id="cd02540">
    <property type="entry name" value="GT2_GlmU_N_bac"/>
    <property type="match status" value="1"/>
</dbReference>
<dbReference type="CDD" id="cd03353">
    <property type="entry name" value="LbH_GlmU_C"/>
    <property type="match status" value="1"/>
</dbReference>
<dbReference type="FunFam" id="2.160.10.10:FF:000011">
    <property type="entry name" value="Bifunctional protein GlmU"/>
    <property type="match status" value="1"/>
</dbReference>
<dbReference type="FunFam" id="3.90.550.10:FF:000006">
    <property type="entry name" value="Bifunctional protein GlmU"/>
    <property type="match status" value="1"/>
</dbReference>
<dbReference type="Gene3D" id="2.160.10.10">
    <property type="entry name" value="Hexapeptide repeat proteins"/>
    <property type="match status" value="1"/>
</dbReference>
<dbReference type="Gene3D" id="3.90.550.10">
    <property type="entry name" value="Spore Coat Polysaccharide Biosynthesis Protein SpsA, Chain A"/>
    <property type="match status" value="1"/>
</dbReference>
<dbReference type="HAMAP" id="MF_01631">
    <property type="entry name" value="GlmU"/>
    <property type="match status" value="1"/>
</dbReference>
<dbReference type="InterPro" id="IPR005882">
    <property type="entry name" value="Bifunctional_GlmU"/>
</dbReference>
<dbReference type="InterPro" id="IPR050065">
    <property type="entry name" value="GlmU-like"/>
</dbReference>
<dbReference type="InterPro" id="IPR038009">
    <property type="entry name" value="GlmU_C_LbH"/>
</dbReference>
<dbReference type="InterPro" id="IPR001451">
    <property type="entry name" value="Hexapep"/>
</dbReference>
<dbReference type="InterPro" id="IPR018357">
    <property type="entry name" value="Hexapep_transf_CS"/>
</dbReference>
<dbReference type="InterPro" id="IPR025877">
    <property type="entry name" value="MobA-like_NTP_Trfase"/>
</dbReference>
<dbReference type="InterPro" id="IPR029044">
    <property type="entry name" value="Nucleotide-diphossugar_trans"/>
</dbReference>
<dbReference type="InterPro" id="IPR011004">
    <property type="entry name" value="Trimer_LpxA-like_sf"/>
</dbReference>
<dbReference type="NCBIfam" id="TIGR01173">
    <property type="entry name" value="glmU"/>
    <property type="match status" value="1"/>
</dbReference>
<dbReference type="NCBIfam" id="NF006986">
    <property type="entry name" value="PRK09451.1"/>
    <property type="match status" value="1"/>
</dbReference>
<dbReference type="PANTHER" id="PTHR43584:SF3">
    <property type="entry name" value="BIFUNCTIONAL PROTEIN GLMU"/>
    <property type="match status" value="1"/>
</dbReference>
<dbReference type="PANTHER" id="PTHR43584">
    <property type="entry name" value="NUCLEOTIDYL TRANSFERASE"/>
    <property type="match status" value="1"/>
</dbReference>
<dbReference type="Pfam" id="PF00132">
    <property type="entry name" value="Hexapep"/>
    <property type="match status" value="1"/>
</dbReference>
<dbReference type="Pfam" id="PF12804">
    <property type="entry name" value="NTP_transf_3"/>
    <property type="match status" value="1"/>
</dbReference>
<dbReference type="SUPFAM" id="SSF53448">
    <property type="entry name" value="Nucleotide-diphospho-sugar transferases"/>
    <property type="match status" value="1"/>
</dbReference>
<dbReference type="SUPFAM" id="SSF51161">
    <property type="entry name" value="Trimeric LpxA-like enzymes"/>
    <property type="match status" value="1"/>
</dbReference>
<dbReference type="PROSITE" id="PS00101">
    <property type="entry name" value="HEXAPEP_TRANSFERASES"/>
    <property type="match status" value="1"/>
</dbReference>
<proteinExistence type="inferred from homology"/>
<evidence type="ECO:0000255" key="1">
    <source>
        <dbReference type="HAMAP-Rule" id="MF_01631"/>
    </source>
</evidence>
<protein>
    <recommendedName>
        <fullName evidence="1">Bifunctional protein GlmU</fullName>
    </recommendedName>
    <domain>
        <recommendedName>
            <fullName evidence="1">UDP-N-acetylglucosamine pyrophosphorylase</fullName>
            <ecNumber evidence="1">2.7.7.23</ecNumber>
        </recommendedName>
        <alternativeName>
            <fullName evidence="1">N-acetylglucosamine-1-phosphate uridyltransferase</fullName>
        </alternativeName>
    </domain>
    <domain>
        <recommendedName>
            <fullName evidence="1">Glucosamine-1-phosphate N-acetyltransferase</fullName>
            <ecNumber evidence="1">2.3.1.157</ecNumber>
        </recommendedName>
    </domain>
</protein>
<comment type="function">
    <text evidence="1">Catalyzes the last two sequential reactions in the de novo biosynthetic pathway for UDP-N-acetylglucosamine (UDP-GlcNAc). The C-terminal domain catalyzes the transfer of acetyl group from acetyl coenzyme A to glucosamine-1-phosphate (GlcN-1-P) to produce N-acetylglucosamine-1-phosphate (GlcNAc-1-P), which is converted into UDP-GlcNAc by the transfer of uridine 5-monophosphate (from uridine 5-triphosphate), a reaction catalyzed by the N-terminal domain.</text>
</comment>
<comment type="catalytic activity">
    <reaction evidence="1">
        <text>alpha-D-glucosamine 1-phosphate + acetyl-CoA = N-acetyl-alpha-D-glucosamine 1-phosphate + CoA + H(+)</text>
        <dbReference type="Rhea" id="RHEA:13725"/>
        <dbReference type="ChEBI" id="CHEBI:15378"/>
        <dbReference type="ChEBI" id="CHEBI:57287"/>
        <dbReference type="ChEBI" id="CHEBI:57288"/>
        <dbReference type="ChEBI" id="CHEBI:57776"/>
        <dbReference type="ChEBI" id="CHEBI:58516"/>
        <dbReference type="EC" id="2.3.1.157"/>
    </reaction>
</comment>
<comment type="catalytic activity">
    <reaction evidence="1">
        <text>N-acetyl-alpha-D-glucosamine 1-phosphate + UTP + H(+) = UDP-N-acetyl-alpha-D-glucosamine + diphosphate</text>
        <dbReference type="Rhea" id="RHEA:13509"/>
        <dbReference type="ChEBI" id="CHEBI:15378"/>
        <dbReference type="ChEBI" id="CHEBI:33019"/>
        <dbReference type="ChEBI" id="CHEBI:46398"/>
        <dbReference type="ChEBI" id="CHEBI:57705"/>
        <dbReference type="ChEBI" id="CHEBI:57776"/>
        <dbReference type="EC" id="2.7.7.23"/>
    </reaction>
</comment>
<comment type="cofactor">
    <cofactor evidence="1">
        <name>Mg(2+)</name>
        <dbReference type="ChEBI" id="CHEBI:18420"/>
    </cofactor>
    <text evidence="1">Binds 1 Mg(2+) ion per subunit.</text>
</comment>
<comment type="pathway">
    <text evidence="1">Nucleotide-sugar biosynthesis; UDP-N-acetyl-alpha-D-glucosamine biosynthesis; N-acetyl-alpha-D-glucosamine 1-phosphate from alpha-D-glucosamine 6-phosphate (route II): step 2/2.</text>
</comment>
<comment type="pathway">
    <text evidence="1">Nucleotide-sugar biosynthesis; UDP-N-acetyl-alpha-D-glucosamine biosynthesis; UDP-N-acetyl-alpha-D-glucosamine from N-acetyl-alpha-D-glucosamine 1-phosphate: step 1/1.</text>
</comment>
<comment type="pathway">
    <text evidence="1">Bacterial outer membrane biogenesis; LPS lipid A biosynthesis.</text>
</comment>
<comment type="subunit">
    <text evidence="1">Homotrimer.</text>
</comment>
<comment type="subcellular location">
    <subcellularLocation>
        <location evidence="1">Cytoplasm</location>
    </subcellularLocation>
</comment>
<comment type="similarity">
    <text evidence="1">In the N-terminal section; belongs to the N-acetylglucosamine-1-phosphate uridyltransferase family.</text>
</comment>
<comment type="similarity">
    <text evidence="1">In the C-terminal section; belongs to the transferase hexapeptide repeat family.</text>
</comment>
<feature type="chain" id="PRO_1000186482" description="Bifunctional protein GlmU">
    <location>
        <begin position="1"/>
        <end position="456"/>
    </location>
</feature>
<feature type="region of interest" description="Pyrophosphorylase" evidence="1">
    <location>
        <begin position="1"/>
        <end position="229"/>
    </location>
</feature>
<feature type="region of interest" description="Linker" evidence="1">
    <location>
        <begin position="230"/>
        <end position="250"/>
    </location>
</feature>
<feature type="region of interest" description="N-acetyltransferase" evidence="1">
    <location>
        <begin position="251"/>
        <end position="456"/>
    </location>
</feature>
<feature type="active site" description="Proton acceptor" evidence="1">
    <location>
        <position position="363"/>
    </location>
</feature>
<feature type="binding site" evidence="1">
    <location>
        <begin position="11"/>
        <end position="14"/>
    </location>
    <ligand>
        <name>UDP-N-acetyl-alpha-D-glucosamine</name>
        <dbReference type="ChEBI" id="CHEBI:57705"/>
    </ligand>
</feature>
<feature type="binding site" evidence="1">
    <location>
        <position position="25"/>
    </location>
    <ligand>
        <name>UDP-N-acetyl-alpha-D-glucosamine</name>
        <dbReference type="ChEBI" id="CHEBI:57705"/>
    </ligand>
</feature>
<feature type="binding site" evidence="1">
    <location>
        <position position="76"/>
    </location>
    <ligand>
        <name>UDP-N-acetyl-alpha-D-glucosamine</name>
        <dbReference type="ChEBI" id="CHEBI:57705"/>
    </ligand>
</feature>
<feature type="binding site" evidence="1">
    <location>
        <begin position="81"/>
        <end position="82"/>
    </location>
    <ligand>
        <name>UDP-N-acetyl-alpha-D-glucosamine</name>
        <dbReference type="ChEBI" id="CHEBI:57705"/>
    </ligand>
</feature>
<feature type="binding site" evidence="1">
    <location>
        <begin position="103"/>
        <end position="105"/>
    </location>
    <ligand>
        <name>UDP-N-acetyl-alpha-D-glucosamine</name>
        <dbReference type="ChEBI" id="CHEBI:57705"/>
    </ligand>
</feature>
<feature type="binding site" evidence="1">
    <location>
        <position position="105"/>
    </location>
    <ligand>
        <name>Mg(2+)</name>
        <dbReference type="ChEBI" id="CHEBI:18420"/>
    </ligand>
</feature>
<feature type="binding site" evidence="1">
    <location>
        <position position="140"/>
    </location>
    <ligand>
        <name>UDP-N-acetyl-alpha-D-glucosamine</name>
        <dbReference type="ChEBI" id="CHEBI:57705"/>
    </ligand>
</feature>
<feature type="binding site" evidence="1">
    <location>
        <position position="154"/>
    </location>
    <ligand>
        <name>UDP-N-acetyl-alpha-D-glucosamine</name>
        <dbReference type="ChEBI" id="CHEBI:57705"/>
    </ligand>
</feature>
<feature type="binding site" evidence="1">
    <location>
        <position position="169"/>
    </location>
    <ligand>
        <name>UDP-N-acetyl-alpha-D-glucosamine</name>
        <dbReference type="ChEBI" id="CHEBI:57705"/>
    </ligand>
</feature>
<feature type="binding site" evidence="1">
    <location>
        <position position="227"/>
    </location>
    <ligand>
        <name>Mg(2+)</name>
        <dbReference type="ChEBI" id="CHEBI:18420"/>
    </ligand>
</feature>
<feature type="binding site" evidence="1">
    <location>
        <position position="227"/>
    </location>
    <ligand>
        <name>UDP-N-acetyl-alpha-D-glucosamine</name>
        <dbReference type="ChEBI" id="CHEBI:57705"/>
    </ligand>
</feature>
<feature type="binding site" evidence="1">
    <location>
        <position position="333"/>
    </location>
    <ligand>
        <name>UDP-N-acetyl-alpha-D-glucosamine</name>
        <dbReference type="ChEBI" id="CHEBI:57705"/>
    </ligand>
</feature>
<feature type="binding site" evidence="1">
    <location>
        <position position="351"/>
    </location>
    <ligand>
        <name>UDP-N-acetyl-alpha-D-glucosamine</name>
        <dbReference type="ChEBI" id="CHEBI:57705"/>
    </ligand>
</feature>
<feature type="binding site" evidence="1">
    <location>
        <position position="366"/>
    </location>
    <ligand>
        <name>UDP-N-acetyl-alpha-D-glucosamine</name>
        <dbReference type="ChEBI" id="CHEBI:57705"/>
    </ligand>
</feature>
<feature type="binding site" evidence="1">
    <location>
        <position position="377"/>
    </location>
    <ligand>
        <name>UDP-N-acetyl-alpha-D-glucosamine</name>
        <dbReference type="ChEBI" id="CHEBI:57705"/>
    </ligand>
</feature>
<feature type="binding site" evidence="1">
    <location>
        <position position="380"/>
    </location>
    <ligand>
        <name>acetyl-CoA</name>
        <dbReference type="ChEBI" id="CHEBI:57288"/>
    </ligand>
</feature>
<feature type="binding site" evidence="1">
    <location>
        <begin position="386"/>
        <end position="387"/>
    </location>
    <ligand>
        <name>acetyl-CoA</name>
        <dbReference type="ChEBI" id="CHEBI:57288"/>
    </ligand>
</feature>
<feature type="binding site" evidence="1">
    <location>
        <position position="405"/>
    </location>
    <ligand>
        <name>acetyl-CoA</name>
        <dbReference type="ChEBI" id="CHEBI:57288"/>
    </ligand>
</feature>
<feature type="binding site" evidence="1">
    <location>
        <position position="423"/>
    </location>
    <ligand>
        <name>acetyl-CoA</name>
        <dbReference type="ChEBI" id="CHEBI:57288"/>
    </ligand>
</feature>
<feature type="binding site" evidence="1">
    <location>
        <position position="440"/>
    </location>
    <ligand>
        <name>acetyl-CoA</name>
        <dbReference type="ChEBI" id="CHEBI:57288"/>
    </ligand>
</feature>